<reference key="1">
    <citation type="journal article" date="2009" name="BMC Genomics">
        <title>Genome evolution driven by host adaptations results in a more virulent and antimicrobial-resistant Streptococcus pneumoniae serotype 14.</title>
        <authorList>
            <person name="Ding F."/>
            <person name="Tang P."/>
            <person name="Hsu M.-H."/>
            <person name="Cui P."/>
            <person name="Hu S."/>
            <person name="Yu J."/>
            <person name="Chiu C.-H."/>
        </authorList>
    </citation>
    <scope>NUCLEOTIDE SEQUENCE [LARGE SCALE GENOMIC DNA]</scope>
    <source>
        <strain>CGSP14</strain>
    </source>
</reference>
<keyword id="KW-0067">ATP-binding</keyword>
<keyword id="KW-0963">Cytoplasm</keyword>
<keyword id="KW-0436">Ligase</keyword>
<keyword id="KW-0547">Nucleotide-binding</keyword>
<keyword id="KW-0819">tRNA processing</keyword>
<gene>
    <name evidence="1" type="primary">tilS</name>
    <name type="ordered locus">SPCG_0010</name>
</gene>
<comment type="function">
    <text evidence="1">Ligates lysine onto the cytidine present at position 34 of the AUA codon-specific tRNA(Ile) that contains the anticodon CAU, in an ATP-dependent manner. Cytidine is converted to lysidine, thus changing the amino acid specificity of the tRNA from methionine to isoleucine.</text>
</comment>
<comment type="catalytic activity">
    <reaction evidence="1">
        <text>cytidine(34) in tRNA(Ile2) + L-lysine + ATP = lysidine(34) in tRNA(Ile2) + AMP + diphosphate + H(+)</text>
        <dbReference type="Rhea" id="RHEA:43744"/>
        <dbReference type="Rhea" id="RHEA-COMP:10625"/>
        <dbReference type="Rhea" id="RHEA-COMP:10670"/>
        <dbReference type="ChEBI" id="CHEBI:15378"/>
        <dbReference type="ChEBI" id="CHEBI:30616"/>
        <dbReference type="ChEBI" id="CHEBI:32551"/>
        <dbReference type="ChEBI" id="CHEBI:33019"/>
        <dbReference type="ChEBI" id="CHEBI:82748"/>
        <dbReference type="ChEBI" id="CHEBI:83665"/>
        <dbReference type="ChEBI" id="CHEBI:456215"/>
        <dbReference type="EC" id="6.3.4.19"/>
    </reaction>
</comment>
<comment type="subcellular location">
    <subcellularLocation>
        <location evidence="1">Cytoplasm</location>
    </subcellularLocation>
</comment>
<comment type="domain">
    <text>The N-terminal region contains the highly conserved SGGXDS motif, predicted to be a P-loop motif involved in ATP binding.</text>
</comment>
<comment type="similarity">
    <text evidence="1">Belongs to the tRNA(Ile)-lysidine synthase family.</text>
</comment>
<dbReference type="EC" id="6.3.4.19" evidence="1"/>
<dbReference type="EMBL" id="CP001033">
    <property type="protein sequence ID" value="ACB89262.1"/>
    <property type="molecule type" value="Genomic_DNA"/>
</dbReference>
<dbReference type="RefSeq" id="WP_001209049.1">
    <property type="nucleotide sequence ID" value="NC_010582.1"/>
</dbReference>
<dbReference type="SMR" id="B2IQZ8"/>
<dbReference type="KEGG" id="spw:SPCG_0010"/>
<dbReference type="HOGENOM" id="CLU_018869_0_2_9"/>
<dbReference type="GO" id="GO:0005737">
    <property type="term" value="C:cytoplasm"/>
    <property type="evidence" value="ECO:0007669"/>
    <property type="project" value="UniProtKB-SubCell"/>
</dbReference>
<dbReference type="GO" id="GO:0005524">
    <property type="term" value="F:ATP binding"/>
    <property type="evidence" value="ECO:0007669"/>
    <property type="project" value="UniProtKB-UniRule"/>
</dbReference>
<dbReference type="GO" id="GO:0032267">
    <property type="term" value="F:tRNA(Ile)-lysidine synthase activity"/>
    <property type="evidence" value="ECO:0007669"/>
    <property type="project" value="UniProtKB-EC"/>
</dbReference>
<dbReference type="GO" id="GO:0006400">
    <property type="term" value="P:tRNA modification"/>
    <property type="evidence" value="ECO:0007669"/>
    <property type="project" value="UniProtKB-UniRule"/>
</dbReference>
<dbReference type="CDD" id="cd01992">
    <property type="entry name" value="TilS_N"/>
    <property type="match status" value="1"/>
</dbReference>
<dbReference type="Gene3D" id="3.40.50.620">
    <property type="entry name" value="HUPs"/>
    <property type="match status" value="1"/>
</dbReference>
<dbReference type="HAMAP" id="MF_01161">
    <property type="entry name" value="tRNA_Ile_lys_synt"/>
    <property type="match status" value="1"/>
</dbReference>
<dbReference type="InterPro" id="IPR012796">
    <property type="entry name" value="Lysidine-tRNA-synth_C"/>
</dbReference>
<dbReference type="InterPro" id="IPR014729">
    <property type="entry name" value="Rossmann-like_a/b/a_fold"/>
</dbReference>
<dbReference type="InterPro" id="IPR011063">
    <property type="entry name" value="TilS/TtcA_N"/>
</dbReference>
<dbReference type="InterPro" id="IPR012094">
    <property type="entry name" value="tRNA_Ile_lys_synt"/>
</dbReference>
<dbReference type="InterPro" id="IPR012795">
    <property type="entry name" value="tRNA_Ile_lys_synt_N"/>
</dbReference>
<dbReference type="NCBIfam" id="TIGR02433">
    <property type="entry name" value="lysidine_TilS_C"/>
    <property type="match status" value="1"/>
</dbReference>
<dbReference type="NCBIfam" id="TIGR02432">
    <property type="entry name" value="lysidine_TilS_N"/>
    <property type="match status" value="1"/>
</dbReference>
<dbReference type="PANTHER" id="PTHR43033">
    <property type="entry name" value="TRNA(ILE)-LYSIDINE SYNTHASE-RELATED"/>
    <property type="match status" value="1"/>
</dbReference>
<dbReference type="PANTHER" id="PTHR43033:SF1">
    <property type="entry name" value="TRNA(ILE)-LYSIDINE SYNTHASE-RELATED"/>
    <property type="match status" value="1"/>
</dbReference>
<dbReference type="Pfam" id="PF01171">
    <property type="entry name" value="ATP_bind_3"/>
    <property type="match status" value="1"/>
</dbReference>
<dbReference type="Pfam" id="PF11734">
    <property type="entry name" value="TilS_C"/>
    <property type="match status" value="1"/>
</dbReference>
<dbReference type="SMART" id="SM00977">
    <property type="entry name" value="TilS_C"/>
    <property type="match status" value="1"/>
</dbReference>
<dbReference type="SUPFAM" id="SSF52402">
    <property type="entry name" value="Adenine nucleotide alpha hydrolases-like"/>
    <property type="match status" value="1"/>
</dbReference>
<dbReference type="SUPFAM" id="SSF56037">
    <property type="entry name" value="PheT/TilS domain"/>
    <property type="match status" value="1"/>
</dbReference>
<sequence length="425" mass="49903">MREQDFLNHFLKKGYFKKHAKAVLALSGGLDSMFLFKVLSTYQKELEIELILAHVNHKQRIESDWEEKELRKLAAEAELPIYISNFSGEFSEARARNFRYDFFQEVMKKTGATALVTAHHADDQVETILMRLIRGTRLRYLSGIKEKQVVGEIEIIRPFLHFQKKDFPSIFHFEDTSNQENHYFRNRIRNSYLPELEKENPRFRDAILGIGNEILDYDLAIAELSNNIDVENLQQLFSYSESTQRVLLQTYLNRFPDLNLTKAQFAEVQQILKSKSQYRHPIKNGYELIKEYQQFQICKISPQADEKEDELVLHYQNQVAYQGYLFSFGLPLEGELIQQIPVSRETSIHIRHRKTGDVLIQNGHRKKLRRLFIDLKIPMEKRNSALIIEQFGEIVSILGIATNNLSKKTKNDIMNTVLYIEKIDR</sequence>
<evidence type="ECO:0000255" key="1">
    <source>
        <dbReference type="HAMAP-Rule" id="MF_01161"/>
    </source>
</evidence>
<organism>
    <name type="scientific">Streptococcus pneumoniae (strain CGSP14)</name>
    <dbReference type="NCBI Taxonomy" id="516950"/>
    <lineage>
        <taxon>Bacteria</taxon>
        <taxon>Bacillati</taxon>
        <taxon>Bacillota</taxon>
        <taxon>Bacilli</taxon>
        <taxon>Lactobacillales</taxon>
        <taxon>Streptococcaceae</taxon>
        <taxon>Streptococcus</taxon>
    </lineage>
</organism>
<name>TILS_STRPS</name>
<proteinExistence type="inferred from homology"/>
<feature type="chain" id="PRO_1000137881" description="tRNA(Ile)-lysidine synthase">
    <location>
        <begin position="1"/>
        <end position="425"/>
    </location>
</feature>
<feature type="binding site" evidence="1">
    <location>
        <begin position="27"/>
        <end position="32"/>
    </location>
    <ligand>
        <name>ATP</name>
        <dbReference type="ChEBI" id="CHEBI:30616"/>
    </ligand>
</feature>
<accession>B2IQZ8</accession>
<protein>
    <recommendedName>
        <fullName evidence="1">tRNA(Ile)-lysidine synthase</fullName>
        <ecNumber evidence="1">6.3.4.19</ecNumber>
    </recommendedName>
    <alternativeName>
        <fullName evidence="1">tRNA(Ile)-2-lysyl-cytidine synthase</fullName>
    </alternativeName>
    <alternativeName>
        <fullName evidence="1">tRNA(Ile)-lysidine synthetase</fullName>
    </alternativeName>
</protein>